<dbReference type="EC" id="5.3.1.6" evidence="1"/>
<dbReference type="EMBL" id="CP000671">
    <property type="protein sequence ID" value="ABQ97626.1"/>
    <property type="molecule type" value="Genomic_DNA"/>
</dbReference>
<dbReference type="SMR" id="A5UA25"/>
<dbReference type="KEGG" id="hip:CGSHiEE_00670"/>
<dbReference type="HOGENOM" id="CLU_056590_1_1_6"/>
<dbReference type="UniPathway" id="UPA00115">
    <property type="reaction ID" value="UER00412"/>
</dbReference>
<dbReference type="GO" id="GO:0005829">
    <property type="term" value="C:cytosol"/>
    <property type="evidence" value="ECO:0007669"/>
    <property type="project" value="TreeGrafter"/>
</dbReference>
<dbReference type="GO" id="GO:0004751">
    <property type="term" value="F:ribose-5-phosphate isomerase activity"/>
    <property type="evidence" value="ECO:0007669"/>
    <property type="project" value="UniProtKB-UniRule"/>
</dbReference>
<dbReference type="GO" id="GO:0006014">
    <property type="term" value="P:D-ribose metabolic process"/>
    <property type="evidence" value="ECO:0007669"/>
    <property type="project" value="TreeGrafter"/>
</dbReference>
<dbReference type="GO" id="GO:0009052">
    <property type="term" value="P:pentose-phosphate shunt, non-oxidative branch"/>
    <property type="evidence" value="ECO:0007669"/>
    <property type="project" value="UniProtKB-UniRule"/>
</dbReference>
<dbReference type="CDD" id="cd01398">
    <property type="entry name" value="RPI_A"/>
    <property type="match status" value="1"/>
</dbReference>
<dbReference type="FunFam" id="3.30.70.260:FF:000004">
    <property type="entry name" value="Ribose-5-phosphate isomerase A"/>
    <property type="match status" value="1"/>
</dbReference>
<dbReference type="FunFam" id="3.40.50.1360:FF:000001">
    <property type="entry name" value="Ribose-5-phosphate isomerase A"/>
    <property type="match status" value="1"/>
</dbReference>
<dbReference type="Gene3D" id="3.30.70.260">
    <property type="match status" value="1"/>
</dbReference>
<dbReference type="Gene3D" id="3.40.50.1360">
    <property type="match status" value="1"/>
</dbReference>
<dbReference type="HAMAP" id="MF_00170">
    <property type="entry name" value="Rib_5P_isom_A"/>
    <property type="match status" value="1"/>
</dbReference>
<dbReference type="InterPro" id="IPR037171">
    <property type="entry name" value="NagB/RpiA_transferase-like"/>
</dbReference>
<dbReference type="InterPro" id="IPR020672">
    <property type="entry name" value="Ribose5P_isomerase_typA_subgr"/>
</dbReference>
<dbReference type="InterPro" id="IPR004788">
    <property type="entry name" value="Ribose5P_isomerase_type_A"/>
</dbReference>
<dbReference type="NCBIfam" id="NF001924">
    <property type="entry name" value="PRK00702.1"/>
    <property type="match status" value="1"/>
</dbReference>
<dbReference type="NCBIfam" id="TIGR00021">
    <property type="entry name" value="rpiA"/>
    <property type="match status" value="1"/>
</dbReference>
<dbReference type="PANTHER" id="PTHR11934">
    <property type="entry name" value="RIBOSE-5-PHOSPHATE ISOMERASE"/>
    <property type="match status" value="1"/>
</dbReference>
<dbReference type="PANTHER" id="PTHR11934:SF0">
    <property type="entry name" value="RIBOSE-5-PHOSPHATE ISOMERASE"/>
    <property type="match status" value="1"/>
</dbReference>
<dbReference type="Pfam" id="PF06026">
    <property type="entry name" value="Rib_5-P_isom_A"/>
    <property type="match status" value="1"/>
</dbReference>
<dbReference type="SUPFAM" id="SSF75445">
    <property type="entry name" value="D-ribose-5-phosphate isomerase (RpiA), lid domain"/>
    <property type="match status" value="1"/>
</dbReference>
<dbReference type="SUPFAM" id="SSF100950">
    <property type="entry name" value="NagB/RpiA/CoA transferase-like"/>
    <property type="match status" value="1"/>
</dbReference>
<proteinExistence type="inferred from homology"/>
<feature type="chain" id="PRO_1000016928" description="Ribose-5-phosphate isomerase A">
    <location>
        <begin position="1"/>
        <end position="219"/>
    </location>
</feature>
<feature type="active site" description="Proton acceptor" evidence="1">
    <location>
        <position position="103"/>
    </location>
</feature>
<feature type="binding site" evidence="1">
    <location>
        <begin position="28"/>
        <end position="31"/>
    </location>
    <ligand>
        <name>substrate</name>
    </ligand>
</feature>
<feature type="binding site" evidence="1">
    <location>
        <begin position="81"/>
        <end position="84"/>
    </location>
    <ligand>
        <name>substrate</name>
    </ligand>
</feature>
<feature type="binding site" evidence="1">
    <location>
        <begin position="94"/>
        <end position="97"/>
    </location>
    <ligand>
        <name>substrate</name>
    </ligand>
</feature>
<feature type="binding site" evidence="1">
    <location>
        <position position="121"/>
    </location>
    <ligand>
        <name>substrate</name>
    </ligand>
</feature>
<sequence length="219" mass="23053">MDQLEMKKLAAQAALEYVKADTIVGVGSGSTVNCFIEALGTIKNKIQGAVAASKASEELLRKQGIEVFNANDVSSLDIYVDGADEINPQKMMIKGGGAALTREKIVAALAKKFICIVDSSKQVDVLGSTFPLPVEVIPMARSQVGRKLVALGGAPEYREGVVTDNGNVILDVHNFSILNPVEMEKELNNVAGVATNGIFALRGADVVIVGTPEGAKIID</sequence>
<accession>A5UA25</accession>
<name>RPIA_HAEIE</name>
<reference key="1">
    <citation type="journal article" date="2007" name="Genome Biol.">
        <title>Characterization and modeling of the Haemophilus influenzae core and supragenomes based on the complete genomic sequences of Rd and 12 clinical nontypeable strains.</title>
        <authorList>
            <person name="Hogg J.S."/>
            <person name="Hu F.Z."/>
            <person name="Janto B."/>
            <person name="Boissy R."/>
            <person name="Hayes J."/>
            <person name="Keefe R."/>
            <person name="Post J.C."/>
            <person name="Ehrlich G.D."/>
        </authorList>
    </citation>
    <scope>NUCLEOTIDE SEQUENCE [LARGE SCALE GENOMIC DNA]</scope>
    <source>
        <strain>PittEE</strain>
    </source>
</reference>
<organism>
    <name type="scientific">Haemophilus influenzae (strain PittEE)</name>
    <dbReference type="NCBI Taxonomy" id="374930"/>
    <lineage>
        <taxon>Bacteria</taxon>
        <taxon>Pseudomonadati</taxon>
        <taxon>Pseudomonadota</taxon>
        <taxon>Gammaproteobacteria</taxon>
        <taxon>Pasteurellales</taxon>
        <taxon>Pasteurellaceae</taxon>
        <taxon>Haemophilus</taxon>
    </lineage>
</organism>
<keyword id="KW-0413">Isomerase</keyword>
<evidence type="ECO:0000255" key="1">
    <source>
        <dbReference type="HAMAP-Rule" id="MF_00170"/>
    </source>
</evidence>
<comment type="function">
    <text evidence="1">Catalyzes the reversible conversion of ribose-5-phosphate to ribulose 5-phosphate.</text>
</comment>
<comment type="catalytic activity">
    <reaction evidence="1">
        <text>aldehydo-D-ribose 5-phosphate = D-ribulose 5-phosphate</text>
        <dbReference type="Rhea" id="RHEA:14657"/>
        <dbReference type="ChEBI" id="CHEBI:58121"/>
        <dbReference type="ChEBI" id="CHEBI:58273"/>
        <dbReference type="EC" id="5.3.1.6"/>
    </reaction>
</comment>
<comment type="pathway">
    <text evidence="1">Carbohydrate degradation; pentose phosphate pathway; D-ribose 5-phosphate from D-ribulose 5-phosphate (non-oxidative stage): step 1/1.</text>
</comment>
<comment type="subunit">
    <text evidence="1">Homodimer.</text>
</comment>
<comment type="similarity">
    <text evidence="1">Belongs to the ribose 5-phosphate isomerase family.</text>
</comment>
<gene>
    <name evidence="1" type="primary">rpiA</name>
    <name type="ordered locus">CGSHiEE_00670</name>
</gene>
<protein>
    <recommendedName>
        <fullName evidence="1">Ribose-5-phosphate isomerase A</fullName>
        <ecNumber evidence="1">5.3.1.6</ecNumber>
    </recommendedName>
    <alternativeName>
        <fullName evidence="1">Phosphoriboisomerase A</fullName>
        <shortName evidence="1">PRI</shortName>
    </alternativeName>
</protein>